<protein>
    <recommendedName>
        <fullName evidence="5">Cilia- and flagella-associated protein 300</fullName>
    </recommendedName>
</protein>
<gene>
    <name evidence="6" type="primary">CFAP300</name>
    <name type="synonym">C11orf70</name>
</gene>
<proteinExistence type="evidence at protein level"/>
<sequence length="267" mass="30859">MATGELGDLGGYYFRFLPQKTFQSLSSKEITSRLRQWSMLGRIKAQAFGFDQTFQSYRKDDFVMAFFKDPNVIPNLKLLSDSSGQWIILGTEVKKIEAINVPCTQLSMSFFHRLYDEDIVRDSGHIVKCLDSFCDPFLISDELRRVLLVEDSEKYEIFSQPDREEFLFCLFKHLCLGGALCQYEDVISPYLETTKLIYKDLVSVRKNPQTKKIQITSSVFKVSAYDSAGMCYPSAKNHEQTFSYFIVDPIRRHLHVLYHCYGVGDMS</sequence>
<organism>
    <name type="scientific">Homo sapiens</name>
    <name type="common">Human</name>
    <dbReference type="NCBI Taxonomy" id="9606"/>
    <lineage>
        <taxon>Eukaryota</taxon>
        <taxon>Metazoa</taxon>
        <taxon>Chordata</taxon>
        <taxon>Craniata</taxon>
        <taxon>Vertebrata</taxon>
        <taxon>Euteleostomi</taxon>
        <taxon>Mammalia</taxon>
        <taxon>Eutheria</taxon>
        <taxon>Euarchontoglires</taxon>
        <taxon>Primates</taxon>
        <taxon>Haplorrhini</taxon>
        <taxon>Catarrhini</taxon>
        <taxon>Hominidae</taxon>
        <taxon>Homo</taxon>
    </lineage>
</organism>
<keyword id="KW-0025">Alternative splicing</keyword>
<keyword id="KW-0966">Cell projection</keyword>
<keyword id="KW-1186">Ciliopathy</keyword>
<keyword id="KW-0963">Cytoplasm</keyword>
<keyword id="KW-0206">Cytoskeleton</keyword>
<keyword id="KW-0225">Disease variant</keyword>
<keyword id="KW-1012">Kartagener syndrome</keyword>
<keyword id="KW-0990">Primary ciliary dyskinesia</keyword>
<keyword id="KW-1267">Proteomics identification</keyword>
<keyword id="KW-1185">Reference proteome</keyword>
<evidence type="ECO:0000250" key="1">
    <source>
        <dbReference type="UniProtKB" id="A0CY51"/>
    </source>
</evidence>
<evidence type="ECO:0000269" key="2">
    <source>
    </source>
</evidence>
<evidence type="ECO:0000269" key="3">
    <source>
    </source>
</evidence>
<evidence type="ECO:0000303" key="4">
    <source>
    </source>
</evidence>
<evidence type="ECO:0000305" key="5"/>
<evidence type="ECO:0000312" key="6">
    <source>
        <dbReference type="HGNC" id="HGNC:28188"/>
    </source>
</evidence>
<name>CF300_HUMAN</name>
<dbReference type="EMBL" id="AK094851">
    <property type="status" value="NOT_ANNOTATED_CDS"/>
    <property type="molecule type" value="mRNA"/>
</dbReference>
<dbReference type="EMBL" id="AP001527">
    <property type="status" value="NOT_ANNOTATED_CDS"/>
    <property type="molecule type" value="Genomic_DNA"/>
</dbReference>
<dbReference type="EMBL" id="BC006128">
    <property type="protein sequence ID" value="AAH06128.1"/>
    <property type="molecule type" value="mRNA"/>
</dbReference>
<dbReference type="CCDS" id="CCDS53698.1">
    <molecule id="Q9BRQ4-3"/>
</dbReference>
<dbReference type="CCDS" id="CCDS8313.2">
    <molecule id="Q9BRQ4-1"/>
</dbReference>
<dbReference type="RefSeq" id="NP_001181934.1">
    <molecule id="Q9BRQ4-3"/>
    <property type="nucleotide sequence ID" value="NM_001195005.2"/>
</dbReference>
<dbReference type="RefSeq" id="NP_116319.2">
    <molecule id="Q9BRQ4-1"/>
    <property type="nucleotide sequence ID" value="NM_032930.3"/>
</dbReference>
<dbReference type="BioGRID" id="124431">
    <property type="interactions" value="14"/>
</dbReference>
<dbReference type="FunCoup" id="Q9BRQ4">
    <property type="interactions" value="62"/>
</dbReference>
<dbReference type="IntAct" id="Q9BRQ4">
    <property type="interactions" value="8"/>
</dbReference>
<dbReference type="STRING" id="9606.ENSP00000414390"/>
<dbReference type="iPTMnet" id="Q9BRQ4"/>
<dbReference type="PhosphoSitePlus" id="Q9BRQ4"/>
<dbReference type="BioMuta" id="C11orf70"/>
<dbReference type="DMDM" id="308153617"/>
<dbReference type="jPOST" id="Q9BRQ4"/>
<dbReference type="MassIVE" id="Q9BRQ4"/>
<dbReference type="PaxDb" id="9606-ENSP00000414390"/>
<dbReference type="PeptideAtlas" id="Q9BRQ4"/>
<dbReference type="ProteomicsDB" id="21250"/>
<dbReference type="ProteomicsDB" id="78804">
    <molecule id="Q9BRQ4-1"/>
</dbReference>
<dbReference type="ProteomicsDB" id="78805">
    <molecule id="Q9BRQ4-2"/>
</dbReference>
<dbReference type="Antibodypedia" id="45426">
    <property type="antibodies" value="45 antibodies from 15 providers"/>
</dbReference>
<dbReference type="DNASU" id="85016"/>
<dbReference type="Ensembl" id="ENST00000434758.7">
    <molecule id="Q9BRQ4-1"/>
    <property type="protein sequence ID" value="ENSP00000414390.2"/>
    <property type="gene ID" value="ENSG00000137691.13"/>
</dbReference>
<dbReference type="Ensembl" id="ENST00000534360.1">
    <molecule id="Q9BRQ4-3"/>
    <property type="protein sequence ID" value="ENSP00000435482.1"/>
    <property type="gene ID" value="ENSG00000137691.13"/>
</dbReference>
<dbReference type="GeneID" id="85016"/>
<dbReference type="KEGG" id="hsa:85016"/>
<dbReference type="MANE-Select" id="ENST00000434758.7">
    <property type="protein sequence ID" value="ENSP00000414390.2"/>
    <property type="RefSeq nucleotide sequence ID" value="NM_032930.3"/>
    <property type="RefSeq protein sequence ID" value="NP_116319.2"/>
</dbReference>
<dbReference type="UCSC" id="uc001pgo.4">
    <molecule id="Q9BRQ4-1"/>
    <property type="organism name" value="human"/>
</dbReference>
<dbReference type="AGR" id="HGNC:28188"/>
<dbReference type="CTD" id="85016"/>
<dbReference type="DisGeNET" id="85016"/>
<dbReference type="GeneCards" id="CFAP300"/>
<dbReference type="HGNC" id="HGNC:28188">
    <property type="gene designation" value="CFAP300"/>
</dbReference>
<dbReference type="HPA" id="ENSG00000137691">
    <property type="expression patterns" value="Tissue enhanced (choroid plexus, fallopian tube, testis)"/>
</dbReference>
<dbReference type="MalaCards" id="CFAP300"/>
<dbReference type="MIM" id="618058">
    <property type="type" value="gene"/>
</dbReference>
<dbReference type="MIM" id="618063">
    <property type="type" value="phenotype"/>
</dbReference>
<dbReference type="neXtProt" id="NX_Q9BRQ4"/>
<dbReference type="OpenTargets" id="ENSG00000137691"/>
<dbReference type="Orphanet" id="244">
    <property type="disease" value="Primary ciliary dyskinesia"/>
</dbReference>
<dbReference type="PharmGKB" id="PA144596489"/>
<dbReference type="VEuPathDB" id="HostDB:ENSG00000137691"/>
<dbReference type="eggNOG" id="ENOG502QUFH">
    <property type="taxonomic scope" value="Eukaryota"/>
</dbReference>
<dbReference type="GeneTree" id="ENSGT00510000047559"/>
<dbReference type="HOGENOM" id="CLU_068703_0_0_1"/>
<dbReference type="InParanoid" id="Q9BRQ4"/>
<dbReference type="OMA" id="FYHCYGV"/>
<dbReference type="OrthoDB" id="10259249at2759"/>
<dbReference type="PAN-GO" id="Q9BRQ4">
    <property type="GO annotations" value="0 GO annotations based on evolutionary models"/>
</dbReference>
<dbReference type="PhylomeDB" id="Q9BRQ4"/>
<dbReference type="TreeFam" id="TF329188"/>
<dbReference type="PathwayCommons" id="Q9BRQ4"/>
<dbReference type="SignaLink" id="Q9BRQ4"/>
<dbReference type="BioGRID-ORCS" id="85016">
    <property type="hits" value="13 hits in 1111 CRISPR screens"/>
</dbReference>
<dbReference type="GenomeRNAi" id="85016"/>
<dbReference type="Pharos" id="Q9BRQ4">
    <property type="development level" value="Tdark"/>
</dbReference>
<dbReference type="PRO" id="PR:Q9BRQ4"/>
<dbReference type="Proteomes" id="UP000005640">
    <property type="component" value="Chromosome 11"/>
</dbReference>
<dbReference type="RNAct" id="Q9BRQ4">
    <property type="molecule type" value="protein"/>
</dbReference>
<dbReference type="Bgee" id="ENSG00000137691">
    <property type="expression patterns" value="Expressed in bronchial epithelial cell and 119 other cell types or tissues"/>
</dbReference>
<dbReference type="ExpressionAtlas" id="Q9BRQ4">
    <property type="expression patterns" value="baseline and differential"/>
</dbReference>
<dbReference type="GO" id="GO:0005737">
    <property type="term" value="C:cytoplasm"/>
    <property type="evidence" value="ECO:0000250"/>
    <property type="project" value="UniProtKB"/>
</dbReference>
<dbReference type="GO" id="GO:0005856">
    <property type="term" value="C:cytoskeleton"/>
    <property type="evidence" value="ECO:0007669"/>
    <property type="project" value="UniProtKB-KW"/>
</dbReference>
<dbReference type="GO" id="GO:0031514">
    <property type="term" value="C:motile cilium"/>
    <property type="evidence" value="ECO:0000250"/>
    <property type="project" value="UniProtKB"/>
</dbReference>
<dbReference type="InterPro" id="IPR029416">
    <property type="entry name" value="CFAP300"/>
</dbReference>
<dbReference type="PANTHER" id="PTHR31078">
    <property type="entry name" value="CILIA- AND FLAGELLA-ASSOCIATED PROTEIN 300"/>
    <property type="match status" value="1"/>
</dbReference>
<dbReference type="PANTHER" id="PTHR31078:SF1">
    <property type="entry name" value="CILIA- AND FLAGELLA-ASSOCIATED PROTEIN 300"/>
    <property type="match status" value="1"/>
</dbReference>
<dbReference type="Pfam" id="PF14926">
    <property type="entry name" value="CFAP300"/>
    <property type="match status" value="1"/>
</dbReference>
<feature type="chain" id="PRO_0000274276" description="Cilia- and flagella-associated protein 300">
    <location>
        <begin position="1"/>
        <end position="267"/>
    </location>
</feature>
<feature type="splice variant" id="VSP_022694" description="In isoform 2." evidence="4">
    <location>
        <begin position="1"/>
        <end position="38"/>
    </location>
</feature>
<feature type="splice variant" id="VSP_046692" description="In isoform 3." evidence="5">
    <original>TEVKKIEAI</original>
    <variation>FASGRLRKI</variation>
    <location>
        <begin position="91"/>
        <end position="99"/>
    </location>
</feature>
<feature type="splice variant" id="VSP_046693" description="In isoform 3." evidence="5">
    <location>
        <begin position="100"/>
        <end position="267"/>
    </location>
</feature>
<feature type="sequence variant" id="VAR_080472" description="In CILD38; loss of ciliary axoneme inner dynein arm and outer dynein arm structures in patient respiratory epithelial cells." evidence="2">
    <location>
        <begin position="52"/>
        <end position="267"/>
    </location>
</feature>
<feature type="sequence variant" id="VAR_080473" description="In CILD38; loss of ciliary axoneme inner dynein arm and outer dynein arm structures in patient respiratory epithelial cells." evidence="2 3">
    <location>
        <begin position="121"/>
        <end position="267"/>
    </location>
</feature>
<feature type="sequence variant" id="VAR_080474" description="In CILD38; loss of ciliary axoneme inner dynein arm and outer dynein arm structures in patient respiratory epithelial cells." evidence="3">
    <location>
        <begin position="145"/>
        <end position="267"/>
    </location>
</feature>
<feature type="sequence variant" id="VAR_080475" description="In CILD38; loss of ciliary axoneme inner dynein arm and outer dynein arm structures in patient respiratory epithelial cells; dbSNP:rs1555071691." evidence="2">
    <original>H</original>
    <variation>R</variation>
    <location>
        <position position="259"/>
    </location>
</feature>
<feature type="sequence conflict" description="In Ref. 1; AK094851." evidence="5" ref="1">
    <original>F</original>
    <variation>S</variation>
    <location>
        <position position="62"/>
    </location>
</feature>
<reference key="1">
    <citation type="journal article" date="2004" name="Nat. Genet.">
        <title>Complete sequencing and characterization of 21,243 full-length human cDNAs.</title>
        <authorList>
            <person name="Ota T."/>
            <person name="Suzuki Y."/>
            <person name="Nishikawa T."/>
            <person name="Otsuki T."/>
            <person name="Sugiyama T."/>
            <person name="Irie R."/>
            <person name="Wakamatsu A."/>
            <person name="Hayashi K."/>
            <person name="Sato H."/>
            <person name="Nagai K."/>
            <person name="Kimura K."/>
            <person name="Makita H."/>
            <person name="Sekine M."/>
            <person name="Obayashi M."/>
            <person name="Nishi T."/>
            <person name="Shibahara T."/>
            <person name="Tanaka T."/>
            <person name="Ishii S."/>
            <person name="Yamamoto J."/>
            <person name="Saito K."/>
            <person name="Kawai Y."/>
            <person name="Isono Y."/>
            <person name="Nakamura Y."/>
            <person name="Nagahari K."/>
            <person name="Murakami K."/>
            <person name="Yasuda T."/>
            <person name="Iwayanagi T."/>
            <person name="Wagatsuma M."/>
            <person name="Shiratori A."/>
            <person name="Sudo H."/>
            <person name="Hosoiri T."/>
            <person name="Kaku Y."/>
            <person name="Kodaira H."/>
            <person name="Kondo H."/>
            <person name="Sugawara M."/>
            <person name="Takahashi M."/>
            <person name="Kanda K."/>
            <person name="Yokoi T."/>
            <person name="Furuya T."/>
            <person name="Kikkawa E."/>
            <person name="Omura Y."/>
            <person name="Abe K."/>
            <person name="Kamihara K."/>
            <person name="Katsuta N."/>
            <person name="Sato K."/>
            <person name="Tanikawa M."/>
            <person name="Yamazaki M."/>
            <person name="Ninomiya K."/>
            <person name="Ishibashi T."/>
            <person name="Yamashita H."/>
            <person name="Murakawa K."/>
            <person name="Fujimori K."/>
            <person name="Tanai H."/>
            <person name="Kimata M."/>
            <person name="Watanabe M."/>
            <person name="Hiraoka S."/>
            <person name="Chiba Y."/>
            <person name="Ishida S."/>
            <person name="Ono Y."/>
            <person name="Takiguchi S."/>
            <person name="Watanabe S."/>
            <person name="Yosida M."/>
            <person name="Hotuta T."/>
            <person name="Kusano J."/>
            <person name="Kanehori K."/>
            <person name="Takahashi-Fujii A."/>
            <person name="Hara H."/>
            <person name="Tanase T.-O."/>
            <person name="Nomura Y."/>
            <person name="Togiya S."/>
            <person name="Komai F."/>
            <person name="Hara R."/>
            <person name="Takeuchi K."/>
            <person name="Arita M."/>
            <person name="Imose N."/>
            <person name="Musashino K."/>
            <person name="Yuuki H."/>
            <person name="Oshima A."/>
            <person name="Sasaki N."/>
            <person name="Aotsuka S."/>
            <person name="Yoshikawa Y."/>
            <person name="Matsunawa H."/>
            <person name="Ichihara T."/>
            <person name="Shiohata N."/>
            <person name="Sano S."/>
            <person name="Moriya S."/>
            <person name="Momiyama H."/>
            <person name="Satoh N."/>
            <person name="Takami S."/>
            <person name="Terashima Y."/>
            <person name="Suzuki O."/>
            <person name="Nakagawa S."/>
            <person name="Senoh A."/>
            <person name="Mizoguchi H."/>
            <person name="Goto Y."/>
            <person name="Shimizu F."/>
            <person name="Wakebe H."/>
            <person name="Hishigaki H."/>
            <person name="Watanabe T."/>
            <person name="Sugiyama A."/>
            <person name="Takemoto M."/>
            <person name="Kawakami B."/>
            <person name="Yamazaki M."/>
            <person name="Watanabe K."/>
            <person name="Kumagai A."/>
            <person name="Itakura S."/>
            <person name="Fukuzumi Y."/>
            <person name="Fujimori Y."/>
            <person name="Komiyama M."/>
            <person name="Tashiro H."/>
            <person name="Tanigami A."/>
            <person name="Fujiwara T."/>
            <person name="Ono T."/>
            <person name="Yamada K."/>
            <person name="Fujii Y."/>
            <person name="Ozaki K."/>
            <person name="Hirao M."/>
            <person name="Ohmori Y."/>
            <person name="Kawabata A."/>
            <person name="Hikiji T."/>
            <person name="Kobatake N."/>
            <person name="Inagaki H."/>
            <person name="Ikema Y."/>
            <person name="Okamoto S."/>
            <person name="Okitani R."/>
            <person name="Kawakami T."/>
            <person name="Noguchi S."/>
            <person name="Itoh T."/>
            <person name="Shigeta K."/>
            <person name="Senba T."/>
            <person name="Matsumura K."/>
            <person name="Nakajima Y."/>
            <person name="Mizuno T."/>
            <person name="Morinaga M."/>
            <person name="Sasaki M."/>
            <person name="Togashi T."/>
            <person name="Oyama M."/>
            <person name="Hata H."/>
            <person name="Watanabe M."/>
            <person name="Komatsu T."/>
            <person name="Mizushima-Sugano J."/>
            <person name="Satoh T."/>
            <person name="Shirai Y."/>
            <person name="Takahashi Y."/>
            <person name="Nakagawa K."/>
            <person name="Okumura K."/>
            <person name="Nagase T."/>
            <person name="Nomura N."/>
            <person name="Kikuchi H."/>
            <person name="Masuho Y."/>
            <person name="Yamashita R."/>
            <person name="Nakai K."/>
            <person name="Yada T."/>
            <person name="Nakamura Y."/>
            <person name="Ohara O."/>
            <person name="Isogai T."/>
            <person name="Sugano S."/>
        </authorList>
    </citation>
    <scope>NUCLEOTIDE SEQUENCE [LARGE SCALE MRNA] (ISOFORM 1)</scope>
    <source>
        <tissue>Caudate nucleus</tissue>
    </source>
</reference>
<reference key="2">
    <citation type="journal article" date="2006" name="Nature">
        <title>Human chromosome 11 DNA sequence and analysis including novel gene identification.</title>
        <authorList>
            <person name="Taylor T.D."/>
            <person name="Noguchi H."/>
            <person name="Totoki Y."/>
            <person name="Toyoda A."/>
            <person name="Kuroki Y."/>
            <person name="Dewar K."/>
            <person name="Lloyd C."/>
            <person name="Itoh T."/>
            <person name="Takeda T."/>
            <person name="Kim D.-W."/>
            <person name="She X."/>
            <person name="Barlow K.F."/>
            <person name="Bloom T."/>
            <person name="Bruford E."/>
            <person name="Chang J.L."/>
            <person name="Cuomo C.A."/>
            <person name="Eichler E."/>
            <person name="FitzGerald M.G."/>
            <person name="Jaffe D.B."/>
            <person name="LaButti K."/>
            <person name="Nicol R."/>
            <person name="Park H.-S."/>
            <person name="Seaman C."/>
            <person name="Sougnez C."/>
            <person name="Yang X."/>
            <person name="Zimmer A.R."/>
            <person name="Zody M.C."/>
            <person name="Birren B.W."/>
            <person name="Nusbaum C."/>
            <person name="Fujiyama A."/>
            <person name="Hattori M."/>
            <person name="Rogers J."/>
            <person name="Lander E.S."/>
            <person name="Sakaki Y."/>
        </authorList>
    </citation>
    <scope>NUCLEOTIDE SEQUENCE [LARGE SCALE GENOMIC DNA]</scope>
</reference>
<reference key="3">
    <citation type="journal article" date="2004" name="Genome Res.">
        <title>The status, quality, and expansion of the NIH full-length cDNA project: the Mammalian Gene Collection (MGC).</title>
        <authorList>
            <consortium name="The MGC Project Team"/>
        </authorList>
    </citation>
    <scope>NUCLEOTIDE SEQUENCE [LARGE SCALE MRNA] (ISOFORM 2)</scope>
    <source>
        <tissue>Pancreas</tissue>
    </source>
</reference>
<reference key="4">
    <citation type="journal article" date="2018" name="Am. J. Hum. Genet.">
        <title>C11orf70 mutations disrupting the intraflagellar transport-dependent assembly of multiple axonemal dyneins cause primary ciliary dyskinesia.</title>
        <authorList>
            <person name="Fassad M.R."/>
            <person name="Shoemark A."/>
            <person name="le Borgne P."/>
            <person name="Koll F."/>
            <person name="Patel M."/>
            <person name="Dixon M."/>
            <person name="Hayward J."/>
            <person name="Richardson C."/>
            <person name="Frost E."/>
            <person name="Jenkins L."/>
            <person name="Cullup T."/>
            <person name="Chung E.M.K."/>
            <person name="Lemullois M."/>
            <person name="Aubusson-Fleury A."/>
            <person name="Hogg C."/>
            <person name="Mitchell D.R."/>
            <person name="Tassin A.M."/>
            <person name="Mitchison H.M."/>
        </authorList>
    </citation>
    <scope>VARIANTS CILD38 52-GLN--SER-267 DEL; 121-ARG--SER-267 DEL AND ARG-259</scope>
    <scope>INVOLVEMENT IN CILD38</scope>
    <scope>INDUCTION</scope>
</reference>
<reference key="5">
    <citation type="journal article" date="2018" name="Am. J. Hum. Genet.">
        <title>Mutations in C11orf70 cause primary ciliary dyskinesia with randomization of left/right body asymmetry due to defects of outer and inner dynein arms.</title>
        <authorList>
            <person name="Hoeben I.M."/>
            <person name="Hjeij R."/>
            <person name="Olbrich H."/>
            <person name="Dougherty G.W."/>
            <person name="Noethe-Menchen T."/>
            <person name="Aprea I."/>
            <person name="Frank D."/>
            <person name="Pennekamp P."/>
            <person name="Dworniczak B."/>
            <person name="Wallmeier J."/>
            <person name="Raidt J."/>
            <person name="Nielsen K.G."/>
            <person name="Philipsen M.C."/>
            <person name="Santamaria F."/>
            <person name="Venditto L."/>
            <person name="Amirav I."/>
            <person name="Mussaffi H."/>
            <person name="Prenzel F."/>
            <person name="Wu K."/>
            <person name="Bakey Z."/>
            <person name="Schmidts M."/>
            <person name="Loges N.T."/>
            <person name="Omran H."/>
        </authorList>
    </citation>
    <scope>VARIANTS CILD38 121-ARG--SER-267 DEL AND 145-ARG--SER-267 DEL</scope>
    <scope>INTERACTION WITH DNAAF2</scope>
    <scope>TISSUE SPECIFICITY</scope>
    <scope>INVOLVEMENT IN CILD38</scope>
    <scope>INDUCTION</scope>
</reference>
<accession>Q9BRQ4</accession>
<accession>E9PJU1</accession>
<comment type="function">
    <text evidence="1">Cilium- and flagellum-specific protein that plays a role in axonemal structure organization and motility. May play a role in outer and inner dynein arm assembly.</text>
</comment>
<comment type="subunit">
    <text evidence="3">Interacts with DNAAF2.</text>
</comment>
<comment type="subcellular location">
    <subcellularLocation>
        <location evidence="1">Cytoplasm</location>
    </subcellularLocation>
    <subcellularLocation>
        <location evidence="1">Cytoplasm</location>
        <location evidence="1">Cytoskeleton</location>
        <location evidence="1">Cilium axoneme</location>
    </subcellularLocation>
</comment>
<comment type="alternative products">
    <event type="alternative splicing"/>
    <isoform>
        <id>Q9BRQ4-1</id>
        <name>1</name>
        <sequence type="displayed"/>
    </isoform>
    <isoform>
        <id>Q9BRQ4-2</id>
        <name>2</name>
        <sequence type="described" ref="VSP_022694"/>
    </isoform>
    <isoform>
        <id>Q9BRQ4-3</id>
        <name>3</name>
        <sequence type="described" ref="VSP_046692 VSP_046693"/>
    </isoform>
</comment>
<comment type="tissue specificity">
    <text evidence="3">Expressed in nasal epithelial cells.</text>
</comment>
<comment type="induction">
    <text evidence="2 3">Up-regulated during ciliogenesis.</text>
</comment>
<comment type="disease" evidence="2 3">
    <disease id="DI-05283">
        <name>Ciliary dyskinesia, primary, 38</name>
        <acronym>CILD38</acronym>
        <description>A form of primary ciliary dyskinesia, a disorder characterized by abnormalities of motile cilia. Respiratory infections leading to chronic inflammation and bronchiectasis are recurrent, due to defects in the respiratory cilia. Some patients exhibit randomization of left-right body asymmetry and situs inversus. Primary ciliary dyskinesia associated with situs inversus is referred to as Kartagener syndrome. CILD38 inheritance is autosomal recessive.</description>
        <dbReference type="MIM" id="618063"/>
    </disease>
    <text>The disease is caused by variants affecting the gene represented in this entry.</text>
</comment>
<comment type="similarity">
    <text evidence="5">Belongs to the CFAP300 family.</text>
</comment>